<sequence length="86" mass="9640">MQKQTLLNIGFGNFVVSSRVITIVNPSSSPMRRLREDARQEGRLVDATQGRKTRSIIVTDSNHVILSAIQAETIGHRYTSEEVEND</sequence>
<evidence type="ECO:0000255" key="1">
    <source>
        <dbReference type="HAMAP-Rule" id="MF_01503"/>
    </source>
</evidence>
<keyword id="KW-1185">Reference proteome</keyword>
<gene>
    <name type="ordered locus">Desal_2819</name>
</gene>
<accession>C6C000</accession>
<reference key="1">
    <citation type="submission" date="2009-06" db="EMBL/GenBank/DDBJ databases">
        <title>Complete sequence of Desulfovibrio salexigens DSM 2638.</title>
        <authorList>
            <consortium name="US DOE Joint Genome Institute"/>
            <person name="Lucas S."/>
            <person name="Copeland A."/>
            <person name="Lapidus A."/>
            <person name="Glavina del Rio T."/>
            <person name="Tice H."/>
            <person name="Bruce D."/>
            <person name="Goodwin L."/>
            <person name="Pitluck S."/>
            <person name="Munk A.C."/>
            <person name="Brettin T."/>
            <person name="Detter J.C."/>
            <person name="Han C."/>
            <person name="Tapia R."/>
            <person name="Larimer F."/>
            <person name="Land M."/>
            <person name="Hauser L."/>
            <person name="Kyrpides N."/>
            <person name="Anderson I."/>
            <person name="Wall J.D."/>
            <person name="Arkin A.P."/>
            <person name="Dehal P."/>
            <person name="Chivian D."/>
            <person name="Giles B."/>
            <person name="Hazen T.C."/>
        </authorList>
    </citation>
    <scope>NUCLEOTIDE SEQUENCE [LARGE SCALE GENOMIC DNA]</scope>
    <source>
        <strain>ATCC 14822 / DSM 2638 / NCIMB 8403 / VKM B-1763</strain>
    </source>
</reference>
<comment type="similarity">
    <text evidence="1">Belongs to the RemA family.</text>
</comment>
<proteinExistence type="inferred from homology"/>
<organism>
    <name type="scientific">Maridesulfovibrio salexigens (strain ATCC 14822 / DSM 2638 / NCIMB 8403 / VKM B-1763)</name>
    <name type="common">Desulfovibrio salexigens</name>
    <dbReference type="NCBI Taxonomy" id="526222"/>
    <lineage>
        <taxon>Bacteria</taxon>
        <taxon>Pseudomonadati</taxon>
        <taxon>Thermodesulfobacteriota</taxon>
        <taxon>Desulfovibrionia</taxon>
        <taxon>Desulfovibrionales</taxon>
        <taxon>Desulfovibrionaceae</taxon>
        <taxon>Maridesulfovibrio</taxon>
    </lineage>
</organism>
<name>Y2819_MARSD</name>
<dbReference type="EMBL" id="CP001649">
    <property type="protein sequence ID" value="ACS80871.1"/>
    <property type="molecule type" value="Genomic_DNA"/>
</dbReference>
<dbReference type="RefSeq" id="WP_015852687.1">
    <property type="nucleotide sequence ID" value="NC_012881.1"/>
</dbReference>
<dbReference type="SMR" id="C6C000"/>
<dbReference type="STRING" id="526222.Desal_2819"/>
<dbReference type="KEGG" id="dsa:Desal_2819"/>
<dbReference type="eggNOG" id="COG2052">
    <property type="taxonomic scope" value="Bacteria"/>
</dbReference>
<dbReference type="HOGENOM" id="CLU_165326_0_0_7"/>
<dbReference type="OrthoDB" id="5432174at2"/>
<dbReference type="Proteomes" id="UP000002601">
    <property type="component" value="Chromosome"/>
</dbReference>
<dbReference type="HAMAP" id="MF_01503">
    <property type="entry name" value="RemA"/>
    <property type="match status" value="1"/>
</dbReference>
<dbReference type="InterPro" id="IPR007169">
    <property type="entry name" value="RemA-like"/>
</dbReference>
<dbReference type="NCBIfam" id="NF003315">
    <property type="entry name" value="PRK04323.1"/>
    <property type="match status" value="1"/>
</dbReference>
<dbReference type="PANTHER" id="PTHR38449:SF1">
    <property type="entry name" value="REGULATORY PROTEIN SSL2874-RELATED"/>
    <property type="match status" value="1"/>
</dbReference>
<dbReference type="PANTHER" id="PTHR38449">
    <property type="entry name" value="REGULATORY PROTEIN TM_1690-RELATED"/>
    <property type="match status" value="1"/>
</dbReference>
<dbReference type="Pfam" id="PF04025">
    <property type="entry name" value="RemA-like"/>
    <property type="match status" value="1"/>
</dbReference>
<feature type="chain" id="PRO_1000215327" description="Putative regulatory protein Desal_2819">
    <location>
        <begin position="1"/>
        <end position="86"/>
    </location>
</feature>
<protein>
    <recommendedName>
        <fullName evidence="1">Putative regulatory protein Desal_2819</fullName>
    </recommendedName>
</protein>